<proteinExistence type="inferred from homology"/>
<organism>
    <name type="scientific">Acholeplasma laidlawii (strain PG-8A)</name>
    <dbReference type="NCBI Taxonomy" id="441768"/>
    <lineage>
        <taxon>Bacteria</taxon>
        <taxon>Bacillati</taxon>
        <taxon>Mycoplasmatota</taxon>
        <taxon>Mollicutes</taxon>
        <taxon>Acholeplasmatales</taxon>
        <taxon>Acholeplasmataceae</taxon>
        <taxon>Acholeplasma</taxon>
    </lineage>
</organism>
<feature type="chain" id="PRO_1000081183" description="tRNA uridine(34) hydroxylase">
    <location>
        <begin position="1"/>
        <end position="318"/>
    </location>
</feature>
<feature type="domain" description="Rhodanese" evidence="1">
    <location>
        <begin position="125"/>
        <end position="219"/>
    </location>
</feature>
<feature type="active site" description="Cysteine persulfide intermediate" evidence="1">
    <location>
        <position position="179"/>
    </location>
</feature>
<protein>
    <recommendedName>
        <fullName evidence="1">tRNA uridine(34) hydroxylase</fullName>
        <ecNumber evidence="1">1.14.-.-</ecNumber>
    </recommendedName>
    <alternativeName>
        <fullName evidence="1">tRNA hydroxylation protein O</fullName>
    </alternativeName>
</protein>
<sequence>MQKNYRVLLYYKYTAIENPEKFKDEHLAYCKSQDLLGRILVSSEGINGTLSGTFEQTENYMDYLKSLQGFEDIFFKIDEVDAHAFSKMHVRVKKELVNLSLEDDVNPLEITGKYLEPIEFYQKLQDPNTVVIDARNDYEFDLGHFRGAIKPEIKNFRDLPDWIRENKDQFKDKEILTYCTGGVRCEKFSGWLIKEGFNVAGQLHGGIHNYGTSKDTEGKLWDGKMYVFDERIAVDINKHEHVVVGRDYFTNEPCERYINCGNPECNKQILASEASEEKYLGSCSHACRIHPNNRYVKKHNLTTDFVLQHIASNLETQI</sequence>
<comment type="function">
    <text evidence="1">Catalyzes oxygen-dependent 5-hydroxyuridine (ho5U) modification at position 34 in tRNAs.</text>
</comment>
<comment type="catalytic activity">
    <reaction evidence="1">
        <text>uridine(34) in tRNA + AH2 + O2 = 5-hydroxyuridine(34) in tRNA + A + H2O</text>
        <dbReference type="Rhea" id="RHEA:64224"/>
        <dbReference type="Rhea" id="RHEA-COMP:11727"/>
        <dbReference type="Rhea" id="RHEA-COMP:13381"/>
        <dbReference type="ChEBI" id="CHEBI:13193"/>
        <dbReference type="ChEBI" id="CHEBI:15377"/>
        <dbReference type="ChEBI" id="CHEBI:15379"/>
        <dbReference type="ChEBI" id="CHEBI:17499"/>
        <dbReference type="ChEBI" id="CHEBI:65315"/>
        <dbReference type="ChEBI" id="CHEBI:136877"/>
    </reaction>
</comment>
<comment type="similarity">
    <text evidence="1">Belongs to the TrhO family.</text>
</comment>
<keyword id="KW-0560">Oxidoreductase</keyword>
<keyword id="KW-1185">Reference proteome</keyword>
<keyword id="KW-0819">tRNA processing</keyword>
<dbReference type="EC" id="1.14.-.-" evidence="1"/>
<dbReference type="EMBL" id="CP000896">
    <property type="protein sequence ID" value="ABX81732.1"/>
    <property type="molecule type" value="Genomic_DNA"/>
</dbReference>
<dbReference type="RefSeq" id="WP_012243063.1">
    <property type="nucleotide sequence ID" value="NC_010163.1"/>
</dbReference>
<dbReference type="SMR" id="A9NHA2"/>
<dbReference type="STRING" id="441768.ACL_1123"/>
<dbReference type="GeneID" id="41339265"/>
<dbReference type="KEGG" id="acl:ACL_1123"/>
<dbReference type="eggNOG" id="COG1054">
    <property type="taxonomic scope" value="Bacteria"/>
</dbReference>
<dbReference type="HOGENOM" id="CLU_038878_1_0_14"/>
<dbReference type="OrthoDB" id="9778326at2"/>
<dbReference type="Proteomes" id="UP000008558">
    <property type="component" value="Chromosome"/>
</dbReference>
<dbReference type="GO" id="GO:0016705">
    <property type="term" value="F:oxidoreductase activity, acting on paired donors, with incorporation or reduction of molecular oxygen"/>
    <property type="evidence" value="ECO:0007669"/>
    <property type="project" value="UniProtKB-UniRule"/>
</dbReference>
<dbReference type="GO" id="GO:0006400">
    <property type="term" value="P:tRNA modification"/>
    <property type="evidence" value="ECO:0007669"/>
    <property type="project" value="UniProtKB-UniRule"/>
</dbReference>
<dbReference type="CDD" id="cd01518">
    <property type="entry name" value="RHOD_YceA"/>
    <property type="match status" value="1"/>
</dbReference>
<dbReference type="Gene3D" id="3.30.70.100">
    <property type="match status" value="1"/>
</dbReference>
<dbReference type="Gene3D" id="3.40.250.10">
    <property type="entry name" value="Rhodanese-like domain"/>
    <property type="match status" value="1"/>
</dbReference>
<dbReference type="HAMAP" id="MF_00469">
    <property type="entry name" value="TrhO"/>
    <property type="match status" value="1"/>
</dbReference>
<dbReference type="InterPro" id="IPR001763">
    <property type="entry name" value="Rhodanese-like_dom"/>
</dbReference>
<dbReference type="InterPro" id="IPR036873">
    <property type="entry name" value="Rhodanese-like_dom_sf"/>
</dbReference>
<dbReference type="InterPro" id="IPR022111">
    <property type="entry name" value="Rhodanese_C"/>
</dbReference>
<dbReference type="InterPro" id="IPR020936">
    <property type="entry name" value="TrhO"/>
</dbReference>
<dbReference type="InterPro" id="IPR040503">
    <property type="entry name" value="TRHO_N"/>
</dbReference>
<dbReference type="NCBIfam" id="NF001135">
    <property type="entry name" value="PRK00142.1-3"/>
    <property type="match status" value="1"/>
</dbReference>
<dbReference type="PANTHER" id="PTHR43268:SF3">
    <property type="entry name" value="RHODANESE-LIKE DOMAIN-CONTAINING PROTEIN 7-RELATED"/>
    <property type="match status" value="1"/>
</dbReference>
<dbReference type="PANTHER" id="PTHR43268">
    <property type="entry name" value="THIOSULFATE SULFURTRANSFERASE/RHODANESE-LIKE DOMAIN-CONTAINING PROTEIN 2"/>
    <property type="match status" value="1"/>
</dbReference>
<dbReference type="Pfam" id="PF00581">
    <property type="entry name" value="Rhodanese"/>
    <property type="match status" value="1"/>
</dbReference>
<dbReference type="Pfam" id="PF12368">
    <property type="entry name" value="Rhodanese_C"/>
    <property type="match status" value="1"/>
</dbReference>
<dbReference type="Pfam" id="PF17773">
    <property type="entry name" value="UPF0176_N"/>
    <property type="match status" value="1"/>
</dbReference>
<dbReference type="SMART" id="SM00450">
    <property type="entry name" value="RHOD"/>
    <property type="match status" value="1"/>
</dbReference>
<dbReference type="SUPFAM" id="SSF52821">
    <property type="entry name" value="Rhodanese/Cell cycle control phosphatase"/>
    <property type="match status" value="1"/>
</dbReference>
<dbReference type="PROSITE" id="PS50206">
    <property type="entry name" value="RHODANESE_3"/>
    <property type="match status" value="1"/>
</dbReference>
<reference key="1">
    <citation type="journal article" date="2011" name="J. Bacteriol.">
        <title>Complete genome and proteome of Acholeplasma laidlawii.</title>
        <authorList>
            <person name="Lazarev V.N."/>
            <person name="Levitskii S.A."/>
            <person name="Basovskii Y.I."/>
            <person name="Chukin M.M."/>
            <person name="Akopian T.A."/>
            <person name="Vereshchagin V.V."/>
            <person name="Kostrjukova E.S."/>
            <person name="Kovaleva G.Y."/>
            <person name="Kazanov M.D."/>
            <person name="Malko D.B."/>
            <person name="Vitreschak A.G."/>
            <person name="Sernova N.V."/>
            <person name="Gelfand M.S."/>
            <person name="Demina I.A."/>
            <person name="Serebryakova M.V."/>
            <person name="Galyamina M.A."/>
            <person name="Vtyurin N.N."/>
            <person name="Rogov S.I."/>
            <person name="Alexeev D.G."/>
            <person name="Ladygina V.G."/>
            <person name="Govorun V.M."/>
        </authorList>
    </citation>
    <scope>NUCLEOTIDE SEQUENCE [LARGE SCALE GENOMIC DNA]</scope>
    <source>
        <strain>PG-8A</strain>
    </source>
</reference>
<evidence type="ECO:0000255" key="1">
    <source>
        <dbReference type="HAMAP-Rule" id="MF_00469"/>
    </source>
</evidence>
<name>TRHO_ACHLI</name>
<gene>
    <name evidence="1" type="primary">trhO</name>
    <name type="ordered locus">ACL_1123</name>
</gene>
<accession>A9NHA2</accession>